<accession>Q1BWS6</accession>
<gene>
    <name evidence="1" type="primary">rbfA</name>
    <name type="ordered locus">Bcen_1021</name>
</gene>
<organism>
    <name type="scientific">Burkholderia orbicola (strain AU 1054)</name>
    <dbReference type="NCBI Taxonomy" id="331271"/>
    <lineage>
        <taxon>Bacteria</taxon>
        <taxon>Pseudomonadati</taxon>
        <taxon>Pseudomonadota</taxon>
        <taxon>Betaproteobacteria</taxon>
        <taxon>Burkholderiales</taxon>
        <taxon>Burkholderiaceae</taxon>
        <taxon>Burkholderia</taxon>
        <taxon>Burkholderia cepacia complex</taxon>
        <taxon>Burkholderia orbicola</taxon>
    </lineage>
</organism>
<sequence length="132" mass="15096">MSRKRTSPNRNVQIADQIQRDLSELIMREVKDPRIGIVTIQSVELTPDYAHAKVYFTALTGDPEKTQEALNHASGHLHNLLFKRLHIHTVPTLHFHYDQTIEKAVEMSRLIKEANSTRAKDDDEADTPAKDD</sequence>
<keyword id="KW-0963">Cytoplasm</keyword>
<keyword id="KW-0690">Ribosome biogenesis</keyword>
<protein>
    <recommendedName>
        <fullName evidence="1">Ribosome-binding factor A</fullName>
    </recommendedName>
</protein>
<dbReference type="EMBL" id="CP000378">
    <property type="protein sequence ID" value="ABF75929.1"/>
    <property type="molecule type" value="Genomic_DNA"/>
</dbReference>
<dbReference type="SMR" id="Q1BWS6"/>
<dbReference type="HOGENOM" id="CLU_089475_5_1_4"/>
<dbReference type="GO" id="GO:0005829">
    <property type="term" value="C:cytosol"/>
    <property type="evidence" value="ECO:0007669"/>
    <property type="project" value="TreeGrafter"/>
</dbReference>
<dbReference type="GO" id="GO:0043024">
    <property type="term" value="F:ribosomal small subunit binding"/>
    <property type="evidence" value="ECO:0007669"/>
    <property type="project" value="TreeGrafter"/>
</dbReference>
<dbReference type="GO" id="GO:0030490">
    <property type="term" value="P:maturation of SSU-rRNA"/>
    <property type="evidence" value="ECO:0007669"/>
    <property type="project" value="UniProtKB-UniRule"/>
</dbReference>
<dbReference type="Gene3D" id="3.30.300.20">
    <property type="match status" value="1"/>
</dbReference>
<dbReference type="HAMAP" id="MF_00003">
    <property type="entry name" value="RbfA"/>
    <property type="match status" value="1"/>
</dbReference>
<dbReference type="InterPro" id="IPR015946">
    <property type="entry name" value="KH_dom-like_a/b"/>
</dbReference>
<dbReference type="InterPro" id="IPR000238">
    <property type="entry name" value="RbfA"/>
</dbReference>
<dbReference type="InterPro" id="IPR023799">
    <property type="entry name" value="RbfA_dom_sf"/>
</dbReference>
<dbReference type="NCBIfam" id="TIGR00082">
    <property type="entry name" value="rbfA"/>
    <property type="match status" value="1"/>
</dbReference>
<dbReference type="PANTHER" id="PTHR33515">
    <property type="entry name" value="RIBOSOME-BINDING FACTOR A, CHLOROPLASTIC-RELATED"/>
    <property type="match status" value="1"/>
</dbReference>
<dbReference type="PANTHER" id="PTHR33515:SF1">
    <property type="entry name" value="RIBOSOME-BINDING FACTOR A, CHLOROPLASTIC-RELATED"/>
    <property type="match status" value="1"/>
</dbReference>
<dbReference type="Pfam" id="PF02033">
    <property type="entry name" value="RBFA"/>
    <property type="match status" value="1"/>
</dbReference>
<dbReference type="SUPFAM" id="SSF89919">
    <property type="entry name" value="Ribosome-binding factor A, RbfA"/>
    <property type="match status" value="1"/>
</dbReference>
<name>RBFA_BURO1</name>
<comment type="function">
    <text evidence="1">One of several proteins that assist in the late maturation steps of the functional core of the 30S ribosomal subunit. Associates with free 30S ribosomal subunits (but not with 30S subunits that are part of 70S ribosomes or polysomes). Required for efficient processing of 16S rRNA. May interact with the 5'-terminal helix region of 16S rRNA.</text>
</comment>
<comment type="subunit">
    <text evidence="1">Monomer. Binds 30S ribosomal subunits, but not 50S ribosomal subunits or 70S ribosomes.</text>
</comment>
<comment type="subcellular location">
    <subcellularLocation>
        <location evidence="1">Cytoplasm</location>
    </subcellularLocation>
</comment>
<comment type="similarity">
    <text evidence="1">Belongs to the RbfA family.</text>
</comment>
<feature type="chain" id="PRO_1000000080" description="Ribosome-binding factor A">
    <location>
        <begin position="1"/>
        <end position="132"/>
    </location>
</feature>
<feature type="region of interest" description="Disordered" evidence="2">
    <location>
        <begin position="113"/>
        <end position="132"/>
    </location>
</feature>
<proteinExistence type="inferred from homology"/>
<evidence type="ECO:0000255" key="1">
    <source>
        <dbReference type="HAMAP-Rule" id="MF_00003"/>
    </source>
</evidence>
<evidence type="ECO:0000256" key="2">
    <source>
        <dbReference type="SAM" id="MobiDB-lite"/>
    </source>
</evidence>
<reference key="1">
    <citation type="submission" date="2006-05" db="EMBL/GenBank/DDBJ databases">
        <title>Complete sequence of chromosome 1 of Burkholderia cenocepacia AU 1054.</title>
        <authorList>
            <consortium name="US DOE Joint Genome Institute"/>
            <person name="Copeland A."/>
            <person name="Lucas S."/>
            <person name="Lapidus A."/>
            <person name="Barry K."/>
            <person name="Detter J.C."/>
            <person name="Glavina del Rio T."/>
            <person name="Hammon N."/>
            <person name="Israni S."/>
            <person name="Dalin E."/>
            <person name="Tice H."/>
            <person name="Pitluck S."/>
            <person name="Chain P."/>
            <person name="Malfatti S."/>
            <person name="Shin M."/>
            <person name="Vergez L."/>
            <person name="Schmutz J."/>
            <person name="Larimer F."/>
            <person name="Land M."/>
            <person name="Hauser L."/>
            <person name="Kyrpides N."/>
            <person name="Lykidis A."/>
            <person name="LiPuma J.J."/>
            <person name="Konstantinidis K."/>
            <person name="Tiedje J.M."/>
            <person name="Richardson P."/>
        </authorList>
    </citation>
    <scope>NUCLEOTIDE SEQUENCE [LARGE SCALE GENOMIC DNA]</scope>
    <source>
        <strain>AU 1054</strain>
    </source>
</reference>